<name>RL36_TRIV2</name>
<sequence>MKVRASVKKICEKCNVIRRRGRVMVICVNPKHKQRQG</sequence>
<protein>
    <recommendedName>
        <fullName evidence="1">Large ribosomal subunit protein bL36</fullName>
    </recommendedName>
    <alternativeName>
        <fullName evidence="2">50S ribosomal protein L36</fullName>
    </alternativeName>
</protein>
<accession>Q3MFA0</accession>
<dbReference type="EMBL" id="CP000117">
    <property type="protein sequence ID" value="ABA20336.1"/>
    <property type="molecule type" value="Genomic_DNA"/>
</dbReference>
<dbReference type="RefSeq" id="WP_010998333.1">
    <property type="nucleotide sequence ID" value="NC_007413.1"/>
</dbReference>
<dbReference type="SMR" id="Q3MFA0"/>
<dbReference type="STRING" id="240292.Ava_0712"/>
<dbReference type="GeneID" id="58723370"/>
<dbReference type="KEGG" id="ava:Ava_0712"/>
<dbReference type="eggNOG" id="COG0257">
    <property type="taxonomic scope" value="Bacteria"/>
</dbReference>
<dbReference type="HOGENOM" id="CLU_135723_6_2_3"/>
<dbReference type="Proteomes" id="UP000002533">
    <property type="component" value="Chromosome"/>
</dbReference>
<dbReference type="GO" id="GO:0005737">
    <property type="term" value="C:cytoplasm"/>
    <property type="evidence" value="ECO:0007669"/>
    <property type="project" value="UniProtKB-ARBA"/>
</dbReference>
<dbReference type="GO" id="GO:1990904">
    <property type="term" value="C:ribonucleoprotein complex"/>
    <property type="evidence" value="ECO:0007669"/>
    <property type="project" value="UniProtKB-KW"/>
</dbReference>
<dbReference type="GO" id="GO:0005840">
    <property type="term" value="C:ribosome"/>
    <property type="evidence" value="ECO:0007669"/>
    <property type="project" value="UniProtKB-KW"/>
</dbReference>
<dbReference type="GO" id="GO:0003735">
    <property type="term" value="F:structural constituent of ribosome"/>
    <property type="evidence" value="ECO:0007669"/>
    <property type="project" value="InterPro"/>
</dbReference>
<dbReference type="GO" id="GO:0006412">
    <property type="term" value="P:translation"/>
    <property type="evidence" value="ECO:0007669"/>
    <property type="project" value="UniProtKB-UniRule"/>
</dbReference>
<dbReference type="HAMAP" id="MF_00251">
    <property type="entry name" value="Ribosomal_bL36"/>
    <property type="match status" value="1"/>
</dbReference>
<dbReference type="InterPro" id="IPR000473">
    <property type="entry name" value="Ribosomal_bL36"/>
</dbReference>
<dbReference type="InterPro" id="IPR035977">
    <property type="entry name" value="Ribosomal_bL36_sp"/>
</dbReference>
<dbReference type="NCBIfam" id="TIGR01022">
    <property type="entry name" value="rpmJ_bact"/>
    <property type="match status" value="1"/>
</dbReference>
<dbReference type="PANTHER" id="PTHR42888">
    <property type="entry name" value="50S RIBOSOMAL PROTEIN L36, CHLOROPLASTIC"/>
    <property type="match status" value="1"/>
</dbReference>
<dbReference type="PANTHER" id="PTHR42888:SF1">
    <property type="entry name" value="LARGE RIBOSOMAL SUBUNIT PROTEIN BL36C"/>
    <property type="match status" value="1"/>
</dbReference>
<dbReference type="Pfam" id="PF00444">
    <property type="entry name" value="Ribosomal_L36"/>
    <property type="match status" value="1"/>
</dbReference>
<dbReference type="SUPFAM" id="SSF57840">
    <property type="entry name" value="Ribosomal protein L36"/>
    <property type="match status" value="1"/>
</dbReference>
<dbReference type="PROSITE" id="PS00828">
    <property type="entry name" value="RIBOSOMAL_L36"/>
    <property type="match status" value="1"/>
</dbReference>
<reference key="1">
    <citation type="journal article" date="2014" name="Stand. Genomic Sci.">
        <title>Complete genome sequence of Anabaena variabilis ATCC 29413.</title>
        <authorList>
            <person name="Thiel T."/>
            <person name="Pratte B.S."/>
            <person name="Zhong J."/>
            <person name="Goodwin L."/>
            <person name="Copeland A."/>
            <person name="Lucas S."/>
            <person name="Han C."/>
            <person name="Pitluck S."/>
            <person name="Land M.L."/>
            <person name="Kyrpides N.C."/>
            <person name="Woyke T."/>
        </authorList>
    </citation>
    <scope>NUCLEOTIDE SEQUENCE [LARGE SCALE GENOMIC DNA]</scope>
    <source>
        <strain>ATCC 29413 / PCC 7937</strain>
    </source>
</reference>
<proteinExistence type="inferred from homology"/>
<feature type="chain" id="PRO_0000302151" description="Large ribosomal subunit protein bL36">
    <location>
        <begin position="1"/>
        <end position="37"/>
    </location>
</feature>
<evidence type="ECO:0000255" key="1">
    <source>
        <dbReference type="HAMAP-Rule" id="MF_00251"/>
    </source>
</evidence>
<evidence type="ECO:0000305" key="2"/>
<keyword id="KW-0687">Ribonucleoprotein</keyword>
<keyword id="KW-0689">Ribosomal protein</keyword>
<comment type="similarity">
    <text evidence="1">Belongs to the bacterial ribosomal protein bL36 family.</text>
</comment>
<organism>
    <name type="scientific">Trichormus variabilis (strain ATCC 29413 / PCC 7937)</name>
    <name type="common">Anabaena variabilis</name>
    <dbReference type="NCBI Taxonomy" id="240292"/>
    <lineage>
        <taxon>Bacteria</taxon>
        <taxon>Bacillati</taxon>
        <taxon>Cyanobacteriota</taxon>
        <taxon>Cyanophyceae</taxon>
        <taxon>Nostocales</taxon>
        <taxon>Nostocaceae</taxon>
        <taxon>Trichormus</taxon>
    </lineage>
</organism>
<gene>
    <name evidence="1" type="primary">rpmJ</name>
    <name type="ordered locus">Ava_0712</name>
</gene>